<comment type="function">
    <text evidence="1">Catalyzes the ATP-dependent biosynthesis of glutamine from glutamate and ammonia.</text>
</comment>
<comment type="catalytic activity">
    <reaction evidence="1">
        <text>L-glutamate + NH4(+) + ATP = L-glutamine + ADP + phosphate + H(+)</text>
        <dbReference type="Rhea" id="RHEA:16169"/>
        <dbReference type="ChEBI" id="CHEBI:15378"/>
        <dbReference type="ChEBI" id="CHEBI:28938"/>
        <dbReference type="ChEBI" id="CHEBI:29985"/>
        <dbReference type="ChEBI" id="CHEBI:30616"/>
        <dbReference type="ChEBI" id="CHEBI:43474"/>
        <dbReference type="ChEBI" id="CHEBI:58359"/>
        <dbReference type="ChEBI" id="CHEBI:456216"/>
        <dbReference type="EC" id="6.3.1.2"/>
    </reaction>
</comment>
<comment type="cofactor">
    <cofactor evidence="4">
        <name>Mg(2+)</name>
        <dbReference type="ChEBI" id="CHEBI:18420"/>
    </cofactor>
    <text evidence="4">Binds 2 Mg(2+) ions per subunit.</text>
</comment>
<comment type="activity regulation">
    <text evidence="5">The activity of this enzyme could be controlled by adenylation under conditions of abundant glutamine.</text>
</comment>
<comment type="subunit">
    <text evidence="1">Oligomer of 12 subunits arranged in the form of two hexameric ring.</text>
</comment>
<comment type="subcellular location">
    <subcellularLocation>
        <location evidence="4">Cytoplasm</location>
    </subcellularLocation>
</comment>
<comment type="similarity">
    <text evidence="8">Belongs to the glutamine synthetase family.</text>
</comment>
<accession>Q9KNJ2</accession>
<reference key="1">
    <citation type="journal article" date="2000" name="Nature">
        <title>DNA sequence of both chromosomes of the cholera pathogen Vibrio cholerae.</title>
        <authorList>
            <person name="Heidelberg J.F."/>
            <person name="Eisen J.A."/>
            <person name="Nelson W.C."/>
            <person name="Clayton R.A."/>
            <person name="Gwinn M.L."/>
            <person name="Dodson R.J."/>
            <person name="Haft D.H."/>
            <person name="Hickey E.K."/>
            <person name="Peterson J.D."/>
            <person name="Umayam L.A."/>
            <person name="Gill S.R."/>
            <person name="Nelson K.E."/>
            <person name="Read T.D."/>
            <person name="Tettelin H."/>
            <person name="Richardson D.L."/>
            <person name="Ermolaeva M.D."/>
            <person name="Vamathevan J.J."/>
            <person name="Bass S."/>
            <person name="Qin H."/>
            <person name="Dragoi I."/>
            <person name="Sellers P."/>
            <person name="McDonald L.A."/>
            <person name="Utterback T.R."/>
            <person name="Fleischmann R.D."/>
            <person name="Nierman W.C."/>
            <person name="White O."/>
            <person name="Salzberg S.L."/>
            <person name="Smith H.O."/>
            <person name="Colwell R.R."/>
            <person name="Mekalanos J.J."/>
            <person name="Venter J.C."/>
            <person name="Fraser C.M."/>
        </authorList>
    </citation>
    <scope>NUCLEOTIDE SEQUENCE [LARGE SCALE GENOMIC DNA]</scope>
    <source>
        <strain>ATCC 39315 / El Tor Inaba N16961</strain>
    </source>
</reference>
<proteinExistence type="inferred from homology"/>
<evidence type="ECO:0000250" key="1">
    <source>
        <dbReference type="UniProtKB" id="P0A1P6"/>
    </source>
</evidence>
<evidence type="ECO:0000250" key="2">
    <source>
        <dbReference type="UniProtKB" id="P12425"/>
    </source>
</evidence>
<evidence type="ECO:0000250" key="3">
    <source>
        <dbReference type="UniProtKB" id="P77961"/>
    </source>
</evidence>
<evidence type="ECO:0000250" key="4">
    <source>
        <dbReference type="UniProtKB" id="P9WN39"/>
    </source>
</evidence>
<evidence type="ECO:0000250" key="5">
    <source>
        <dbReference type="UniProtKB" id="Q3V5W6"/>
    </source>
</evidence>
<evidence type="ECO:0000255" key="6">
    <source>
        <dbReference type="PROSITE-ProRule" id="PRU01330"/>
    </source>
</evidence>
<evidence type="ECO:0000255" key="7">
    <source>
        <dbReference type="PROSITE-ProRule" id="PRU01331"/>
    </source>
</evidence>
<evidence type="ECO:0000305" key="8"/>
<dbReference type="EC" id="6.3.1.2" evidence="1"/>
<dbReference type="EMBL" id="AE003852">
    <property type="protein sequence ID" value="AAF95885.1"/>
    <property type="molecule type" value="Genomic_DNA"/>
</dbReference>
<dbReference type="PIR" id="A82038">
    <property type="entry name" value="A82038"/>
</dbReference>
<dbReference type="RefSeq" id="NP_232372.1">
    <property type="nucleotide sequence ID" value="NC_002505.1"/>
</dbReference>
<dbReference type="SMR" id="Q9KNJ2"/>
<dbReference type="STRING" id="243277.VC_2746"/>
<dbReference type="DNASU" id="2614909"/>
<dbReference type="EnsemblBacteria" id="AAF95885">
    <property type="protein sequence ID" value="AAF95885"/>
    <property type="gene ID" value="VC_2746"/>
</dbReference>
<dbReference type="KEGG" id="vch:VC_2746"/>
<dbReference type="PATRIC" id="fig|243277.26.peg.2622"/>
<dbReference type="eggNOG" id="COG0174">
    <property type="taxonomic scope" value="Bacteria"/>
</dbReference>
<dbReference type="HOGENOM" id="CLU_017290_1_2_6"/>
<dbReference type="Proteomes" id="UP000000584">
    <property type="component" value="Chromosome 1"/>
</dbReference>
<dbReference type="GO" id="GO:0005737">
    <property type="term" value="C:cytoplasm"/>
    <property type="evidence" value="ECO:0000318"/>
    <property type="project" value="GO_Central"/>
</dbReference>
<dbReference type="GO" id="GO:0016020">
    <property type="term" value="C:membrane"/>
    <property type="evidence" value="ECO:0000318"/>
    <property type="project" value="GO_Central"/>
</dbReference>
<dbReference type="GO" id="GO:0005524">
    <property type="term" value="F:ATP binding"/>
    <property type="evidence" value="ECO:0007669"/>
    <property type="project" value="UniProtKB-KW"/>
</dbReference>
<dbReference type="GO" id="GO:0004356">
    <property type="term" value="F:glutamine synthetase activity"/>
    <property type="evidence" value="ECO:0000318"/>
    <property type="project" value="GO_Central"/>
</dbReference>
<dbReference type="GO" id="GO:0046872">
    <property type="term" value="F:metal ion binding"/>
    <property type="evidence" value="ECO:0007669"/>
    <property type="project" value="UniProtKB-KW"/>
</dbReference>
<dbReference type="GO" id="GO:0006542">
    <property type="term" value="P:glutamine biosynthetic process"/>
    <property type="evidence" value="ECO:0000318"/>
    <property type="project" value="GO_Central"/>
</dbReference>
<dbReference type="GO" id="GO:0019740">
    <property type="term" value="P:nitrogen utilization"/>
    <property type="evidence" value="ECO:0000318"/>
    <property type="project" value="GO_Central"/>
</dbReference>
<dbReference type="FunFam" id="3.10.20.70:FF:000001">
    <property type="entry name" value="Glutamine synthetase"/>
    <property type="match status" value="1"/>
</dbReference>
<dbReference type="FunFam" id="3.30.590.10:FF:000001">
    <property type="entry name" value="Glutamine synthetase"/>
    <property type="match status" value="1"/>
</dbReference>
<dbReference type="Gene3D" id="3.10.20.70">
    <property type="entry name" value="Glutamine synthetase, N-terminal domain"/>
    <property type="match status" value="1"/>
</dbReference>
<dbReference type="Gene3D" id="3.30.590.10">
    <property type="entry name" value="Glutamine synthetase/guanido kinase, catalytic domain"/>
    <property type="match status" value="1"/>
</dbReference>
<dbReference type="InterPro" id="IPR008147">
    <property type="entry name" value="Gln_synt_N"/>
</dbReference>
<dbReference type="InterPro" id="IPR036651">
    <property type="entry name" value="Gln_synt_N_sf"/>
</dbReference>
<dbReference type="InterPro" id="IPR014746">
    <property type="entry name" value="Gln_synth/guanido_kin_cat_dom"/>
</dbReference>
<dbReference type="InterPro" id="IPR008146">
    <property type="entry name" value="Gln_synth_cat_dom"/>
</dbReference>
<dbReference type="InterPro" id="IPR027303">
    <property type="entry name" value="Gln_synth_gly_rich_site"/>
</dbReference>
<dbReference type="InterPro" id="IPR004809">
    <property type="entry name" value="Gln_synth_I"/>
</dbReference>
<dbReference type="InterPro" id="IPR001637">
    <property type="entry name" value="Gln_synth_I_adenylation_site"/>
</dbReference>
<dbReference type="InterPro" id="IPR027302">
    <property type="entry name" value="Gln_synth_N_conserv_site"/>
</dbReference>
<dbReference type="NCBIfam" id="TIGR00653">
    <property type="entry name" value="GlnA"/>
    <property type="match status" value="1"/>
</dbReference>
<dbReference type="NCBIfam" id="NF007006">
    <property type="entry name" value="PRK09469.1"/>
    <property type="match status" value="1"/>
</dbReference>
<dbReference type="PANTHER" id="PTHR43407">
    <property type="entry name" value="GLUTAMINE SYNTHETASE"/>
    <property type="match status" value="1"/>
</dbReference>
<dbReference type="PANTHER" id="PTHR43407:SF2">
    <property type="entry name" value="GLUTAMINE SYNTHETASE"/>
    <property type="match status" value="1"/>
</dbReference>
<dbReference type="Pfam" id="PF00120">
    <property type="entry name" value="Gln-synt_C"/>
    <property type="match status" value="1"/>
</dbReference>
<dbReference type="Pfam" id="PF03951">
    <property type="entry name" value="Gln-synt_N"/>
    <property type="match status" value="1"/>
</dbReference>
<dbReference type="SMART" id="SM01230">
    <property type="entry name" value="Gln-synt_C"/>
    <property type="match status" value="1"/>
</dbReference>
<dbReference type="SUPFAM" id="SSF54368">
    <property type="entry name" value="Glutamine synthetase, N-terminal domain"/>
    <property type="match status" value="1"/>
</dbReference>
<dbReference type="SUPFAM" id="SSF55931">
    <property type="entry name" value="Glutamine synthetase/guanido kinase"/>
    <property type="match status" value="1"/>
</dbReference>
<dbReference type="PROSITE" id="PS00180">
    <property type="entry name" value="GLNA_1"/>
    <property type="match status" value="1"/>
</dbReference>
<dbReference type="PROSITE" id="PS00182">
    <property type="entry name" value="GLNA_ADENYLATION"/>
    <property type="match status" value="1"/>
</dbReference>
<dbReference type="PROSITE" id="PS00181">
    <property type="entry name" value="GLNA_ATP"/>
    <property type="match status" value="1"/>
</dbReference>
<dbReference type="PROSITE" id="PS51986">
    <property type="entry name" value="GS_BETA_GRASP"/>
    <property type="match status" value="1"/>
</dbReference>
<dbReference type="PROSITE" id="PS51987">
    <property type="entry name" value="GS_CATALYTIC"/>
    <property type="match status" value="1"/>
</dbReference>
<keyword id="KW-0067">ATP-binding</keyword>
<keyword id="KW-0963">Cytoplasm</keyword>
<keyword id="KW-0436">Ligase</keyword>
<keyword id="KW-0460">Magnesium</keyword>
<keyword id="KW-0479">Metal-binding</keyword>
<keyword id="KW-0547">Nucleotide-binding</keyword>
<keyword id="KW-0597">Phosphoprotein</keyword>
<keyword id="KW-1185">Reference proteome</keyword>
<sequence>MSVENVLSLIQENEVKFVDLRFTDTKGKEQHISIPAHQIDADFFEDGKMFDGSSVAGWKGINESDMVMMPDPSSAVLDPFTEDATLNIRCDILEPATMQGYDRDPRSIAKRAEEYMRSTGIADTVLVGPEPEFFLFDDVKFATNMSGSFFKIDDVEAAWNTGTEYEDGNKGHRPGVKGGYFPVAPVDSSQDIRSAMCLIMEEMGLVVEAHHHEVATAGQNEIATRFNTLTTKADEIQIYKYVVHNVAHAFGKTATFMPKPLVGDNGSGMHVHQSLAKDGVNLFAGDKYGGLSETALYYIGGIIKHARALNAITNPSTNSYKRLVPHYEAPVMLAYSARNRSASIRIPVVPSPKARRIEVRFPDPAANPYLAFAAMLMAGLDGIKNKIHPGEAMDKDLYDLPAEEAAEIPKVAESLQQALQYLDADREFLTAGGVFSDDFIDSYIALKTKDVERVNVAVHPLEFELYYSV</sequence>
<feature type="chain" id="PRO_0000153276" description="Glutamine synthetase">
    <location>
        <begin position="1"/>
        <end position="469"/>
    </location>
</feature>
<feature type="domain" description="GS beta-grasp" evidence="6">
    <location>
        <begin position="13"/>
        <end position="97"/>
    </location>
</feature>
<feature type="domain" description="GS catalytic" evidence="7">
    <location>
        <begin position="105"/>
        <end position="469"/>
    </location>
</feature>
<feature type="binding site" evidence="4">
    <location>
        <position position="130"/>
    </location>
    <ligand>
        <name>Mg(2+)</name>
        <dbReference type="ChEBI" id="CHEBI:18420"/>
        <label>1</label>
    </ligand>
</feature>
<feature type="binding site" evidence="4">
    <location>
        <position position="132"/>
    </location>
    <ligand>
        <name>Mg(2+)</name>
        <dbReference type="ChEBI" id="CHEBI:18420"/>
        <label>2</label>
    </ligand>
</feature>
<feature type="binding site" evidence="1">
    <location>
        <position position="208"/>
    </location>
    <ligand>
        <name>ATP</name>
        <dbReference type="ChEBI" id="CHEBI:30616"/>
    </ligand>
</feature>
<feature type="binding site" evidence="4">
    <location>
        <position position="213"/>
    </location>
    <ligand>
        <name>Mg(2+)</name>
        <dbReference type="ChEBI" id="CHEBI:18420"/>
        <label>2</label>
    </ligand>
</feature>
<feature type="binding site" evidence="4">
    <location>
        <position position="221"/>
    </location>
    <ligand>
        <name>Mg(2+)</name>
        <dbReference type="ChEBI" id="CHEBI:18420"/>
        <label>2</label>
    </ligand>
</feature>
<feature type="binding site" evidence="1">
    <location>
        <begin position="265"/>
        <end position="266"/>
    </location>
    <ligand>
        <name>L-glutamate</name>
        <dbReference type="ChEBI" id="CHEBI:29985"/>
    </ligand>
</feature>
<feature type="binding site" evidence="2">
    <location>
        <position position="266"/>
    </location>
    <ligand>
        <name>L-glutamate</name>
        <dbReference type="ChEBI" id="CHEBI:29985"/>
    </ligand>
</feature>
<feature type="binding site" evidence="4">
    <location>
        <position position="270"/>
    </location>
    <ligand>
        <name>Mg(2+)</name>
        <dbReference type="ChEBI" id="CHEBI:18420"/>
        <label>1</label>
    </ligand>
</feature>
<feature type="binding site" evidence="1">
    <location>
        <begin position="272"/>
        <end position="274"/>
    </location>
    <ligand>
        <name>ATP</name>
        <dbReference type="ChEBI" id="CHEBI:30616"/>
    </ligand>
</feature>
<feature type="binding site" evidence="3">
    <location>
        <position position="274"/>
    </location>
    <ligand>
        <name>ATP</name>
        <dbReference type="ChEBI" id="CHEBI:30616"/>
    </ligand>
</feature>
<feature type="binding site" evidence="1">
    <location>
        <position position="322"/>
    </location>
    <ligand>
        <name>L-glutamate</name>
        <dbReference type="ChEBI" id="CHEBI:29985"/>
    </ligand>
</feature>
<feature type="binding site" evidence="1">
    <location>
        <position position="328"/>
    </location>
    <ligand>
        <name>L-glutamate</name>
        <dbReference type="ChEBI" id="CHEBI:29985"/>
    </ligand>
</feature>
<feature type="binding site" evidence="4">
    <location>
        <position position="340"/>
    </location>
    <ligand>
        <name>ATP</name>
        <dbReference type="ChEBI" id="CHEBI:30616"/>
    </ligand>
</feature>
<feature type="binding site" evidence="4">
    <location>
        <position position="340"/>
    </location>
    <ligand>
        <name>L-glutamate</name>
        <dbReference type="ChEBI" id="CHEBI:29985"/>
    </ligand>
</feature>
<feature type="binding site" evidence="4">
    <location>
        <position position="345"/>
    </location>
    <ligand>
        <name>ATP</name>
        <dbReference type="ChEBI" id="CHEBI:30616"/>
    </ligand>
</feature>
<feature type="binding site" evidence="3">
    <location>
        <position position="353"/>
    </location>
    <ligand>
        <name>ATP</name>
        <dbReference type="ChEBI" id="CHEBI:30616"/>
    </ligand>
</feature>
<feature type="binding site" evidence="4">
    <location>
        <position position="358"/>
    </location>
    <ligand>
        <name>Mg(2+)</name>
        <dbReference type="ChEBI" id="CHEBI:18420"/>
        <label>1</label>
    </ligand>
</feature>
<feature type="binding site" evidence="1">
    <location>
        <position position="360"/>
    </location>
    <ligand>
        <name>L-glutamate</name>
        <dbReference type="ChEBI" id="CHEBI:29985"/>
    </ligand>
</feature>
<feature type="modified residue" description="O-AMP-tyrosine" evidence="4">
    <location>
        <position position="398"/>
    </location>
</feature>
<protein>
    <recommendedName>
        <fullName evidence="1">Glutamine synthetase</fullName>
        <shortName evidence="1">GS</shortName>
        <ecNumber evidence="1">6.3.1.2</ecNumber>
    </recommendedName>
    <alternativeName>
        <fullName evidence="8">Glutamate--ammonia ligase</fullName>
    </alternativeName>
    <alternativeName>
        <fullName evidence="1">Glutamine synthetase I beta</fullName>
        <shortName evidence="1">GSI beta</shortName>
    </alternativeName>
</protein>
<organism>
    <name type="scientific">Vibrio cholerae serotype O1 (strain ATCC 39315 / El Tor Inaba N16961)</name>
    <dbReference type="NCBI Taxonomy" id="243277"/>
    <lineage>
        <taxon>Bacteria</taxon>
        <taxon>Pseudomonadati</taxon>
        <taxon>Pseudomonadota</taxon>
        <taxon>Gammaproteobacteria</taxon>
        <taxon>Vibrionales</taxon>
        <taxon>Vibrionaceae</taxon>
        <taxon>Vibrio</taxon>
    </lineage>
</organism>
<name>GLN1B_VIBCH</name>
<gene>
    <name type="primary">glnAv</name>
    <name type="ordered locus">VC_2746</name>
</gene>